<keyword id="KW-1003">Cell membrane</keyword>
<keyword id="KW-0472">Membrane</keyword>
<keyword id="KW-1185">Reference proteome</keyword>
<keyword id="KW-0812">Transmembrane</keyword>
<keyword id="KW-1133">Transmembrane helix</keyword>
<feature type="chain" id="PRO_0000103946" description="Uncharacterized protein Rv2075c">
    <location>
        <begin position="1"/>
        <end position="487"/>
    </location>
</feature>
<feature type="transmembrane region" description="Helical" evidence="1">
    <location>
        <begin position="10"/>
        <end position="30"/>
    </location>
</feature>
<feature type="transmembrane region" description="Helical" evidence="1">
    <location>
        <begin position="45"/>
        <end position="65"/>
    </location>
</feature>
<feature type="transmembrane region" description="Helical" evidence="1">
    <location>
        <begin position="439"/>
        <end position="459"/>
    </location>
</feature>
<protein>
    <recommendedName>
        <fullName>Uncharacterized protein Rv2075c</fullName>
    </recommendedName>
</protein>
<dbReference type="EMBL" id="AL123456">
    <property type="protein sequence ID" value="CCP44849.1"/>
    <property type="molecule type" value="Genomic_DNA"/>
</dbReference>
<dbReference type="PIR" id="F70765">
    <property type="entry name" value="F70765"/>
</dbReference>
<dbReference type="RefSeq" id="NP_216591.1">
    <property type="nucleotide sequence ID" value="NC_000962.3"/>
</dbReference>
<dbReference type="RefSeq" id="WP_003899158.1">
    <property type="nucleotide sequence ID" value="NZ_NVQJ01000047.1"/>
</dbReference>
<dbReference type="STRING" id="83332.Rv2075c"/>
<dbReference type="PaxDb" id="83332-Rv2075c"/>
<dbReference type="DNASU" id="888771"/>
<dbReference type="GeneID" id="888771"/>
<dbReference type="KEGG" id="mtu:Rv2075c"/>
<dbReference type="KEGG" id="mtv:RVBD_2075c"/>
<dbReference type="TubercuList" id="Rv2075c"/>
<dbReference type="eggNOG" id="ENOG5032YHY">
    <property type="taxonomic scope" value="Bacteria"/>
</dbReference>
<dbReference type="InParanoid" id="P9WLL5"/>
<dbReference type="OrthoDB" id="195526at2"/>
<dbReference type="Proteomes" id="UP000001584">
    <property type="component" value="Chromosome"/>
</dbReference>
<dbReference type="GO" id="GO:0005886">
    <property type="term" value="C:plasma membrane"/>
    <property type="evidence" value="ECO:0007669"/>
    <property type="project" value="UniProtKB-SubCell"/>
</dbReference>
<dbReference type="GO" id="GO:0008081">
    <property type="term" value="F:phosphoric diester hydrolase activity"/>
    <property type="evidence" value="ECO:0007669"/>
    <property type="project" value="InterPro"/>
</dbReference>
<dbReference type="GO" id="GO:0006629">
    <property type="term" value="P:lipid metabolic process"/>
    <property type="evidence" value="ECO:0007669"/>
    <property type="project" value="InterPro"/>
</dbReference>
<dbReference type="CDD" id="cd08590">
    <property type="entry name" value="PI-PLCc_Rv2075c_like"/>
    <property type="match status" value="1"/>
</dbReference>
<dbReference type="Gene3D" id="3.20.20.190">
    <property type="entry name" value="Phosphatidylinositol (PI) phosphodiesterase"/>
    <property type="match status" value="1"/>
</dbReference>
<dbReference type="InterPro" id="IPR016187">
    <property type="entry name" value="CTDL_fold"/>
</dbReference>
<dbReference type="InterPro" id="IPR017946">
    <property type="entry name" value="PLC-like_Pdiesterase_TIM-brl"/>
</dbReference>
<dbReference type="InterPro" id="IPR051008">
    <property type="entry name" value="Telomere_Capping_Maintenance"/>
</dbReference>
<dbReference type="PANTHER" id="PTHR35518:SF2">
    <property type="entry name" value="MAINTENANCE OF TELOMERE CAPPING PROTEIN 6"/>
    <property type="match status" value="1"/>
</dbReference>
<dbReference type="PANTHER" id="PTHR35518">
    <property type="entry name" value="MAINTENANCE OF TELOMOERE CAPPING"/>
    <property type="match status" value="1"/>
</dbReference>
<dbReference type="SUPFAM" id="SSF56436">
    <property type="entry name" value="C-type lectin-like"/>
    <property type="match status" value="1"/>
</dbReference>
<dbReference type="SUPFAM" id="SSF51695">
    <property type="entry name" value="PLC-like phosphodiesterases"/>
    <property type="match status" value="1"/>
</dbReference>
<proteinExistence type="predicted"/>
<gene>
    <name type="ordered locus">Rv2075c</name>
    <name type="ORF">MTCY49.14c</name>
</gene>
<accession>P9WLL5</accession>
<accession>L0TBE8</accession>
<accession>Q10683</accession>
<reference key="1">
    <citation type="journal article" date="1998" name="Nature">
        <title>Deciphering the biology of Mycobacterium tuberculosis from the complete genome sequence.</title>
        <authorList>
            <person name="Cole S.T."/>
            <person name="Brosch R."/>
            <person name="Parkhill J."/>
            <person name="Garnier T."/>
            <person name="Churcher C.M."/>
            <person name="Harris D.E."/>
            <person name="Gordon S.V."/>
            <person name="Eiglmeier K."/>
            <person name="Gas S."/>
            <person name="Barry C.E. III"/>
            <person name="Tekaia F."/>
            <person name="Badcock K."/>
            <person name="Basham D."/>
            <person name="Brown D."/>
            <person name="Chillingworth T."/>
            <person name="Connor R."/>
            <person name="Davies R.M."/>
            <person name="Devlin K."/>
            <person name="Feltwell T."/>
            <person name="Gentles S."/>
            <person name="Hamlin N."/>
            <person name="Holroyd S."/>
            <person name="Hornsby T."/>
            <person name="Jagels K."/>
            <person name="Krogh A."/>
            <person name="McLean J."/>
            <person name="Moule S."/>
            <person name="Murphy L.D."/>
            <person name="Oliver S."/>
            <person name="Osborne J."/>
            <person name="Quail M.A."/>
            <person name="Rajandream M.A."/>
            <person name="Rogers J."/>
            <person name="Rutter S."/>
            <person name="Seeger K."/>
            <person name="Skelton S."/>
            <person name="Squares S."/>
            <person name="Squares R."/>
            <person name="Sulston J.E."/>
            <person name="Taylor K."/>
            <person name="Whitehead S."/>
            <person name="Barrell B.G."/>
        </authorList>
    </citation>
    <scope>NUCLEOTIDE SEQUENCE [LARGE SCALE GENOMIC DNA]</scope>
    <source>
        <strain>ATCC 25618 / H37Rv</strain>
    </source>
</reference>
<organism>
    <name type="scientific">Mycobacterium tuberculosis (strain ATCC 25618 / H37Rv)</name>
    <dbReference type="NCBI Taxonomy" id="83332"/>
    <lineage>
        <taxon>Bacteria</taxon>
        <taxon>Bacillati</taxon>
        <taxon>Actinomycetota</taxon>
        <taxon>Actinomycetes</taxon>
        <taxon>Mycobacteriales</taxon>
        <taxon>Mycobacteriaceae</taxon>
        <taxon>Mycobacterium</taxon>
        <taxon>Mycobacterium tuberculosis complex</taxon>
    </lineage>
</organism>
<sequence>MPRARWLQSAALMGALAVVLITAAPVAADAYQVPAPPSPTASCDVISPVAIPCVALGKFADAVAAECRRVGVPDARCVLPLAHRVTQAARDAYLQSWVHRTARFQDALQDPVPLRETQWLGTHNSFNSLSDSFTVSHADSNQQLSLAQQLDIDVRALELDLHYLPRLEGHGAPGVTVCHGLGPKNANLGCTVEPLLATVLPQIANWLNAPGHTEEVILLYLEDQLKNASAYESVVATLDQVLRRADGTSLIYRPNPARRATNGCVPLPLDVSREEIRASGARAVLVGSCAPGWSAAVFDWSGVELESGSNSGYRPYPACDATYGRGVYAWRLVRYYEDSTLATALANPTRPPANPQALTPPKVPAMTDCGVNLFGFDQLLPEDGRIQASLWSWAPDEPRAGAGACALQGADGRWVAASCGDPHPAACRDAAGRWTVTPAPVVFAGAALACTAIGADFTLPRTGNQNARLHAVAGPAGGAWVHYLLPP</sequence>
<comment type="subcellular location">
    <subcellularLocation>
        <location evidence="2">Cell membrane</location>
        <topology evidence="2">Multi-pass membrane protein</topology>
    </subcellularLocation>
</comment>
<evidence type="ECO:0000255" key="1"/>
<evidence type="ECO:0000305" key="2"/>
<name>Y2075_MYCTU</name>